<reference key="1">
    <citation type="journal article" date="2006" name="Science">
        <title>Genomic islands and the ecology and evolution of Prochlorococcus.</title>
        <authorList>
            <person name="Coleman M.L."/>
            <person name="Sullivan M.B."/>
            <person name="Martiny A.C."/>
            <person name="Steglich C."/>
            <person name="Barry K."/>
            <person name="Delong E.F."/>
            <person name="Chisholm S.W."/>
        </authorList>
    </citation>
    <scope>NUCLEOTIDE SEQUENCE [LARGE SCALE GENOMIC DNA]</scope>
    <source>
        <strain>MIT 9312</strain>
    </source>
</reference>
<proteinExistence type="inferred from homology"/>
<comment type="function">
    <text evidence="1">Component of the cytochrome b6-f complex, which mediates electron transfer between photosystem II (PSII) and photosystem I (PSI), cyclic electron flow around PSI, and state transitions.</text>
</comment>
<comment type="catalytic activity">
    <reaction evidence="1">
        <text>2 oxidized [plastocyanin] + a plastoquinol + 2 H(+)(in) = 2 reduced [plastocyanin] + a plastoquinone + 4 H(+)(out)</text>
        <dbReference type="Rhea" id="RHEA:22148"/>
        <dbReference type="Rhea" id="RHEA-COMP:9561"/>
        <dbReference type="Rhea" id="RHEA-COMP:9562"/>
        <dbReference type="Rhea" id="RHEA-COMP:10039"/>
        <dbReference type="Rhea" id="RHEA-COMP:10040"/>
        <dbReference type="ChEBI" id="CHEBI:15378"/>
        <dbReference type="ChEBI" id="CHEBI:17757"/>
        <dbReference type="ChEBI" id="CHEBI:29036"/>
        <dbReference type="ChEBI" id="CHEBI:49552"/>
        <dbReference type="ChEBI" id="CHEBI:62192"/>
        <dbReference type="EC" id="7.1.1.6"/>
    </reaction>
</comment>
<comment type="cofactor">
    <cofactor evidence="1">
        <name>[2Fe-2S] cluster</name>
        <dbReference type="ChEBI" id="CHEBI:190135"/>
    </cofactor>
    <text evidence="1">Binds 1 [2Fe-2S] cluster per subunit.</text>
</comment>
<comment type="subunit">
    <text evidence="1">The 4 large subunits of the cytochrome b6-f complex are cytochrome b6, subunit IV (17 kDa polypeptide, PetD), cytochrome f and the Rieske protein, while the 4 small subunits are PetG, PetL, PetM and PetN. The complex functions as a dimer.</text>
</comment>
<comment type="subcellular location">
    <subcellularLocation>
        <location evidence="1">Cellular thylakoid membrane</location>
        <topology evidence="1">Single-pass membrane protein</topology>
    </subcellularLocation>
    <text evidence="1">The transmembrane helix obliquely spans the membrane in one monomer, and its extrinsic C-terminal domain is part of the other monomer.</text>
</comment>
<comment type="miscellaneous">
    <text>The Rieske iron-sulfur protein is a high potential 2Fe-2S protein.</text>
</comment>
<comment type="similarity">
    <text evidence="1">Belongs to the Rieske iron-sulfur protein family.</text>
</comment>
<sequence length="178" mass="18924">MTQLSSNDVPSMGRRQFMNLLTFGTATGVALGALYPVANYFMPLRAGGGGGGTSAKDELGNPVTKTGWLATHQAGDRSLVQGLKGDPTYLIVNEGGEIGEFGLNAICTHLGCVVPWDSGANKFICPCHGSQYDTNGKVVRGPAPLSLALAHVDIEDDAVLVKQWSETDFRTNENPWWA</sequence>
<accession>Q31C72</accession>
<organism>
    <name type="scientific">Prochlorococcus marinus (strain MIT 9312)</name>
    <dbReference type="NCBI Taxonomy" id="74546"/>
    <lineage>
        <taxon>Bacteria</taxon>
        <taxon>Bacillati</taxon>
        <taxon>Cyanobacteriota</taxon>
        <taxon>Cyanophyceae</taxon>
        <taxon>Synechococcales</taxon>
        <taxon>Prochlorococcaceae</taxon>
        <taxon>Prochlorococcus</taxon>
    </lineage>
</organism>
<protein>
    <recommendedName>
        <fullName evidence="1">Cytochrome b6-f complex iron-sulfur subunit</fullName>
        <ecNumber evidence="1">7.1.1.6</ecNumber>
    </recommendedName>
    <alternativeName>
        <fullName evidence="1">Plastohydroquinone:plastocyanin oxidoreductase iron-sulfur protein</fullName>
        <shortName evidence="1">ISP</shortName>
        <shortName evidence="1">RISP</shortName>
    </alternativeName>
    <alternativeName>
        <fullName evidence="1">Rieske iron-sulfur protein</fullName>
    </alternativeName>
</protein>
<gene>
    <name evidence="1" type="primary">petC</name>
    <name type="ordered locus">PMT9312_0462</name>
</gene>
<feature type="chain" id="PRO_0000298458" description="Cytochrome b6-f complex iron-sulfur subunit">
    <location>
        <begin position="1"/>
        <end position="178"/>
    </location>
</feature>
<feature type="transmembrane region" description="Helical" evidence="1">
    <location>
        <begin position="20"/>
        <end position="42"/>
    </location>
</feature>
<feature type="domain" description="Rieske" evidence="1">
    <location>
        <begin position="65"/>
        <end position="161"/>
    </location>
</feature>
<feature type="binding site" evidence="1">
    <location>
        <position position="107"/>
    </location>
    <ligand>
        <name>[2Fe-2S] cluster</name>
        <dbReference type="ChEBI" id="CHEBI:190135"/>
    </ligand>
</feature>
<feature type="binding site" evidence="1">
    <location>
        <position position="109"/>
    </location>
    <ligand>
        <name>[2Fe-2S] cluster</name>
        <dbReference type="ChEBI" id="CHEBI:190135"/>
    </ligand>
</feature>
<feature type="binding site" evidence="1">
    <location>
        <position position="125"/>
    </location>
    <ligand>
        <name>[2Fe-2S] cluster</name>
        <dbReference type="ChEBI" id="CHEBI:190135"/>
    </ligand>
</feature>
<feature type="binding site" evidence="1">
    <location>
        <position position="128"/>
    </location>
    <ligand>
        <name>[2Fe-2S] cluster</name>
        <dbReference type="ChEBI" id="CHEBI:190135"/>
    </ligand>
</feature>
<feature type="disulfide bond" evidence="1">
    <location>
        <begin position="112"/>
        <end position="127"/>
    </location>
</feature>
<name>UCRI_PROM9</name>
<evidence type="ECO:0000255" key="1">
    <source>
        <dbReference type="HAMAP-Rule" id="MF_01335"/>
    </source>
</evidence>
<keyword id="KW-0001">2Fe-2S</keyword>
<keyword id="KW-1015">Disulfide bond</keyword>
<keyword id="KW-0249">Electron transport</keyword>
<keyword id="KW-0408">Iron</keyword>
<keyword id="KW-0411">Iron-sulfur</keyword>
<keyword id="KW-0472">Membrane</keyword>
<keyword id="KW-0479">Metal-binding</keyword>
<keyword id="KW-0793">Thylakoid</keyword>
<keyword id="KW-1278">Translocase</keyword>
<keyword id="KW-0812">Transmembrane</keyword>
<keyword id="KW-1133">Transmembrane helix</keyword>
<keyword id="KW-0813">Transport</keyword>
<dbReference type="EC" id="7.1.1.6" evidence="1"/>
<dbReference type="EMBL" id="CP000111">
    <property type="protein sequence ID" value="ABB49523.1"/>
    <property type="molecule type" value="Genomic_DNA"/>
</dbReference>
<dbReference type="RefSeq" id="WP_011376022.1">
    <property type="nucleotide sequence ID" value="NC_007577.1"/>
</dbReference>
<dbReference type="SMR" id="Q31C72"/>
<dbReference type="STRING" id="74546.PMT9312_0462"/>
<dbReference type="KEGG" id="pmi:PMT9312_0462"/>
<dbReference type="eggNOG" id="COG0723">
    <property type="taxonomic scope" value="Bacteria"/>
</dbReference>
<dbReference type="HOGENOM" id="CLU_055690_8_0_3"/>
<dbReference type="OrthoDB" id="9767869at2"/>
<dbReference type="Proteomes" id="UP000002715">
    <property type="component" value="Chromosome"/>
</dbReference>
<dbReference type="GO" id="GO:0031676">
    <property type="term" value="C:plasma membrane-derived thylakoid membrane"/>
    <property type="evidence" value="ECO:0007669"/>
    <property type="project" value="UniProtKB-SubCell"/>
</dbReference>
<dbReference type="GO" id="GO:0051537">
    <property type="term" value="F:2 iron, 2 sulfur cluster binding"/>
    <property type="evidence" value="ECO:0007669"/>
    <property type="project" value="UniProtKB-KW"/>
</dbReference>
<dbReference type="GO" id="GO:0045158">
    <property type="term" value="F:electron transporter, transferring electrons within cytochrome b6/f complex of photosystem II activity"/>
    <property type="evidence" value="ECO:0007669"/>
    <property type="project" value="UniProtKB-UniRule"/>
</dbReference>
<dbReference type="GO" id="GO:0046872">
    <property type="term" value="F:metal ion binding"/>
    <property type="evidence" value="ECO:0007669"/>
    <property type="project" value="UniProtKB-KW"/>
</dbReference>
<dbReference type="GO" id="GO:0004497">
    <property type="term" value="F:monooxygenase activity"/>
    <property type="evidence" value="ECO:0007669"/>
    <property type="project" value="UniProtKB-ARBA"/>
</dbReference>
<dbReference type="GO" id="GO:0016705">
    <property type="term" value="F:oxidoreductase activity, acting on paired donors, with incorporation or reduction of molecular oxygen"/>
    <property type="evidence" value="ECO:0007669"/>
    <property type="project" value="UniProtKB-ARBA"/>
</dbReference>
<dbReference type="GO" id="GO:0009496">
    <property type="term" value="F:plastoquinol--plastocyanin reductase activity"/>
    <property type="evidence" value="ECO:0007669"/>
    <property type="project" value="UniProtKB-UniRule"/>
</dbReference>
<dbReference type="GO" id="GO:0015979">
    <property type="term" value="P:photosynthesis"/>
    <property type="evidence" value="ECO:0007669"/>
    <property type="project" value="UniProtKB-UniRule"/>
</dbReference>
<dbReference type="CDD" id="cd03471">
    <property type="entry name" value="Rieske_cytochrome_b6f"/>
    <property type="match status" value="1"/>
</dbReference>
<dbReference type="FunFam" id="2.102.10.10:FF:000007">
    <property type="entry name" value="Cytochrome b6-f complex iron-sulfur subunit"/>
    <property type="match status" value="1"/>
</dbReference>
<dbReference type="Gene3D" id="2.102.10.10">
    <property type="entry name" value="Rieske [2Fe-2S] iron-sulphur domain"/>
    <property type="match status" value="1"/>
</dbReference>
<dbReference type="Gene3D" id="1.20.5.700">
    <property type="entry name" value="Single helix bin"/>
    <property type="match status" value="1"/>
</dbReference>
<dbReference type="HAMAP" id="MF_01335">
    <property type="entry name" value="Cytb6_f_Rieske"/>
    <property type="match status" value="1"/>
</dbReference>
<dbReference type="InterPro" id="IPR023960">
    <property type="entry name" value="Cyt_b6_f_Rieske"/>
</dbReference>
<dbReference type="InterPro" id="IPR017941">
    <property type="entry name" value="Rieske_2Fe-2S"/>
</dbReference>
<dbReference type="InterPro" id="IPR036922">
    <property type="entry name" value="Rieske_2Fe-2S_sf"/>
</dbReference>
<dbReference type="InterPro" id="IPR014349">
    <property type="entry name" value="Rieske_Fe-S_prot"/>
</dbReference>
<dbReference type="InterPro" id="IPR005805">
    <property type="entry name" value="Rieske_Fe-S_prot_C"/>
</dbReference>
<dbReference type="InterPro" id="IPR006311">
    <property type="entry name" value="TAT_signal"/>
</dbReference>
<dbReference type="NCBIfam" id="NF045928">
    <property type="entry name" value="Cytb6fFeSPetC"/>
    <property type="match status" value="1"/>
</dbReference>
<dbReference type="NCBIfam" id="NF010001">
    <property type="entry name" value="PRK13474.1"/>
    <property type="match status" value="1"/>
</dbReference>
<dbReference type="PANTHER" id="PTHR10134">
    <property type="entry name" value="CYTOCHROME B-C1 COMPLEX SUBUNIT RIESKE, MITOCHONDRIAL"/>
    <property type="match status" value="1"/>
</dbReference>
<dbReference type="Pfam" id="PF00355">
    <property type="entry name" value="Rieske"/>
    <property type="match status" value="1"/>
</dbReference>
<dbReference type="Pfam" id="PF25471">
    <property type="entry name" value="TM_PetC"/>
    <property type="match status" value="1"/>
</dbReference>
<dbReference type="PRINTS" id="PR00162">
    <property type="entry name" value="RIESKE"/>
</dbReference>
<dbReference type="SUPFAM" id="SSF50022">
    <property type="entry name" value="ISP domain"/>
    <property type="match status" value="1"/>
</dbReference>
<dbReference type="PROSITE" id="PS51296">
    <property type="entry name" value="RIESKE"/>
    <property type="match status" value="1"/>
</dbReference>
<dbReference type="PROSITE" id="PS51318">
    <property type="entry name" value="TAT"/>
    <property type="match status" value="1"/>
</dbReference>